<sequence length="539" mass="60943">MLVPVLTLLGTLTATGTLVYHFDERLPVVRFRLLTTFLVLSSGQLLLYALWKVFLKPLCFSPFKHLPKPPLDQWPLWRDHEDGQRGGRAQVGIIHCRGILNGERLIVSSPTALAKIASDNYTFIKPMAIKLLAGRVLGMGLVLTERDEHKQQRKLFLPPFAPKHIRDLYPTFWRKSREVTERMGDEIHATGAGNGVFEIGEWAARVALDIITLSTMGKDFGSVRDADAPLAKVYHTVLQPTLGHVVIAVLKNFLPARLVEALPLRSNRHQGDAYDTIRGVCRDLLREKKDQLAGHHLGGKDILSVCLRYEDIAGVDEEEVINQMTTILGAGHETISVGITWAIYMLCLHRDWQARLREEVRATLPSPDRAQESASSADVERMPLMRAFLEEVLRWYPPIPMTMREPLVDTELDGQYVPRGTRIVVPIKAINREERYWGPDAKRFSPSRWLKNDREFNPSGGVSSKYGYLSFMHGPRSCVASEFARAEMACVVSAWVGRFDLDLSDEHFRDEENMRTSNGNFSGKPLEGLYVRAQVLEGW</sequence>
<reference key="1">
    <citation type="journal article" date="2019" name="Org. Lett.">
        <title>Discovery and Heterologous Biosynthesis of the Burnettramic Acids: Rare PKS-NRPS-Derived Bolaamphiphilic Pyrrolizidinediones from an Australian Fungus, Aspergillus burnettii.</title>
        <authorList>
            <person name="Li H."/>
            <person name="Gilchrist C.L.M."/>
            <person name="Lacey H.J."/>
            <person name="Crombie A."/>
            <person name="Vuong D."/>
            <person name="Pitt J.I."/>
            <person name="Lacey E."/>
            <person name="Chooi Y.H."/>
            <person name="Piggott A.M."/>
        </authorList>
    </citation>
    <scope>NUCLEOTIDE SEQUENCE [GENOMIC DNA]</scope>
    <scope>FUNCTION</scope>
    <scope>PATHWAY</scope>
    <source>
        <strain>FRR 5400</strain>
    </source>
</reference>
<organism>
    <name type="scientific">Petromyces alliaceus</name>
    <name type="common">Aspergillus alliaceus</name>
    <dbReference type="NCBI Taxonomy" id="209559"/>
    <lineage>
        <taxon>Eukaryota</taxon>
        <taxon>Fungi</taxon>
        <taxon>Dikarya</taxon>
        <taxon>Ascomycota</taxon>
        <taxon>Pezizomycotina</taxon>
        <taxon>Eurotiomycetes</taxon>
        <taxon>Eurotiomycetidae</taxon>
        <taxon>Eurotiales</taxon>
        <taxon>Aspergillaceae</taxon>
        <taxon>Aspergillus</taxon>
        <taxon>Aspergillus subgen. Circumdati</taxon>
    </lineage>
</organism>
<dbReference type="EC" id="1.-.-.-" evidence="4"/>
<dbReference type="EMBL" id="MK425157">
    <property type="protein sequence ID" value="QBE85643.1"/>
    <property type="molecule type" value="Genomic_DNA"/>
</dbReference>
<dbReference type="SMR" id="A0A411KZY9"/>
<dbReference type="GlyCosmos" id="A0A411KZY9">
    <property type="glycosylation" value="2 sites, No reported glycans"/>
</dbReference>
<dbReference type="GO" id="GO:0020037">
    <property type="term" value="F:heme binding"/>
    <property type="evidence" value="ECO:0007669"/>
    <property type="project" value="InterPro"/>
</dbReference>
<dbReference type="GO" id="GO:0005506">
    <property type="term" value="F:iron ion binding"/>
    <property type="evidence" value="ECO:0007669"/>
    <property type="project" value="InterPro"/>
</dbReference>
<dbReference type="GO" id="GO:0004497">
    <property type="term" value="F:monooxygenase activity"/>
    <property type="evidence" value="ECO:0007669"/>
    <property type="project" value="UniProtKB-KW"/>
</dbReference>
<dbReference type="GO" id="GO:0016705">
    <property type="term" value="F:oxidoreductase activity, acting on paired donors, with incorporation or reduction of molecular oxygen"/>
    <property type="evidence" value="ECO:0007669"/>
    <property type="project" value="InterPro"/>
</dbReference>
<dbReference type="GO" id="GO:0017000">
    <property type="term" value="P:antibiotic biosynthetic process"/>
    <property type="evidence" value="ECO:0007669"/>
    <property type="project" value="UniProtKB-KW"/>
</dbReference>
<dbReference type="CDD" id="cd11069">
    <property type="entry name" value="CYP_FUM15-like"/>
    <property type="match status" value="1"/>
</dbReference>
<dbReference type="Gene3D" id="1.10.630.10">
    <property type="entry name" value="Cytochrome P450"/>
    <property type="match status" value="1"/>
</dbReference>
<dbReference type="InterPro" id="IPR001128">
    <property type="entry name" value="Cyt_P450"/>
</dbReference>
<dbReference type="InterPro" id="IPR002403">
    <property type="entry name" value="Cyt_P450_E_grp-IV"/>
</dbReference>
<dbReference type="InterPro" id="IPR036396">
    <property type="entry name" value="Cyt_P450_sf"/>
</dbReference>
<dbReference type="InterPro" id="IPR050121">
    <property type="entry name" value="Cytochrome_P450_monoxygenase"/>
</dbReference>
<dbReference type="PANTHER" id="PTHR24305">
    <property type="entry name" value="CYTOCHROME P450"/>
    <property type="match status" value="1"/>
</dbReference>
<dbReference type="PANTHER" id="PTHR24305:SF166">
    <property type="entry name" value="CYTOCHROME P450 12A4, MITOCHONDRIAL-RELATED"/>
    <property type="match status" value="1"/>
</dbReference>
<dbReference type="Pfam" id="PF00067">
    <property type="entry name" value="p450"/>
    <property type="match status" value="1"/>
</dbReference>
<dbReference type="PRINTS" id="PR00465">
    <property type="entry name" value="EP450IV"/>
</dbReference>
<dbReference type="PRINTS" id="PR00385">
    <property type="entry name" value="P450"/>
</dbReference>
<dbReference type="SUPFAM" id="SSF48264">
    <property type="entry name" value="Cytochrome P450"/>
    <property type="match status" value="1"/>
</dbReference>
<feature type="signal peptide" evidence="2">
    <location>
        <begin position="1"/>
        <end position="16"/>
    </location>
</feature>
<feature type="chain" id="PRO_0000448732" description="Cytochrome P450 monooxygenase buaD">
    <location>
        <begin position="17"/>
        <end position="539"/>
    </location>
</feature>
<feature type="binding site" description="axial binding residue" evidence="1">
    <location>
        <position position="478"/>
    </location>
    <ligand>
        <name>heme</name>
        <dbReference type="ChEBI" id="CHEBI:30413"/>
    </ligand>
    <ligandPart>
        <name>Fe</name>
        <dbReference type="ChEBI" id="CHEBI:18248"/>
    </ligandPart>
</feature>
<feature type="glycosylation site" description="N-linked (GlcNAc...) asparagine" evidence="3">
    <location>
        <position position="120"/>
    </location>
</feature>
<feature type="glycosylation site" description="N-linked (GlcNAc...) asparagine" evidence="3">
    <location>
        <position position="520"/>
    </location>
</feature>
<proteinExistence type="inferred from homology"/>
<evidence type="ECO:0000250" key="1">
    <source>
        <dbReference type="UniProtKB" id="P04798"/>
    </source>
</evidence>
<evidence type="ECO:0000255" key="2"/>
<evidence type="ECO:0000255" key="3">
    <source>
        <dbReference type="PROSITE-ProRule" id="PRU00498"/>
    </source>
</evidence>
<evidence type="ECO:0000269" key="4">
    <source>
    </source>
</evidence>
<evidence type="ECO:0000303" key="5">
    <source>
    </source>
</evidence>
<evidence type="ECO:0000305" key="6"/>
<name>BUAD_PETAA</name>
<protein>
    <recommendedName>
        <fullName evidence="5">Cytochrome P450 monooxygenase buaD</fullName>
        <ecNumber evidence="4">1.-.-.-</ecNumber>
    </recommendedName>
    <alternativeName>
        <fullName evidence="5">Burnettramic acids biosynthesis cluster protein D</fullName>
    </alternativeName>
</protein>
<gene>
    <name evidence="5" type="primary">buaD</name>
</gene>
<accession>A0A411KZY9</accession>
<comment type="function">
    <text evidence="4">Cytochrome P450 monooxygenase; part of the gene cluster that mediates the biosynthesis of burnettramic acids, an unusual class of bolaamphiphilic pyrrolizidinediones that display potent antibacterial, antifungal, and cytotoxic activities (PubMed:30735051). The first step of the biosynthesis of burnettramic acids is the hydroxylation of proline by the proline hydroxylase buaE to generate 4-hydroxyproline (PubMed:30735051). The PKS-NRPS buaA and trans-enoyl reductase buaC construct the highly reduced polyketide chain, and the condensation (C) domain of buaA then catalyzes the amide bond formation with the activated 4-hydroxyproline (PubMed:30735051). This is followed by the R domain releasing the nascent polyketide-peptide directly via a Dieckmann condensation to afford a tetramic acid fused to the hydroxyproline, generating the bicyclic pyrrolidinedione moiety (PubMed:30735051). The cytochrome P450 monooxygenases buaD and buaG are likely responsible for the multiple hydroxylations on the polyketide chain and its terminus, although in the heterologous context, buaD does not appear to be required. Therefore, while buaG may be a multifunctional cytochrome P450 monooxygenase, it cannot be ruled out that the two secondary alcohols on the polyketide chain could have an acetate origin (PubMed:30735051). Finally, the glycosyltransferase buaB transfers beta-D-mannose to the aglycone burnettramic acid A to form burnettramic acid A (PubMed:30735051). Burnettramic acid B is a minor cis-pyrrolizidine epimer of burnettramic acid A and it is likely that small amounts of it form naturally in acidic environments (PubMed:30735051).</text>
</comment>
<comment type="cofactor">
    <cofactor evidence="1">
        <name>heme</name>
        <dbReference type="ChEBI" id="CHEBI:30413"/>
    </cofactor>
</comment>
<comment type="pathway">
    <text evidence="4">Mycotoxin biosynthesis.</text>
</comment>
<comment type="similarity">
    <text evidence="6">Belongs to the cytochrome P450 family.</text>
</comment>
<keyword id="KW-0045">Antibiotic biosynthesis</keyword>
<keyword id="KW-0325">Glycoprotein</keyword>
<keyword id="KW-0349">Heme</keyword>
<keyword id="KW-0408">Iron</keyword>
<keyword id="KW-0479">Metal-binding</keyword>
<keyword id="KW-0503">Monooxygenase</keyword>
<keyword id="KW-0560">Oxidoreductase</keyword>
<keyword id="KW-0732">Signal</keyword>